<sequence length="620" mass="64680">MSSGVQGGPAANANAYQTHPLRDAASALGTLSPQAYVDVVSAAQRNFLERMSQLASEQCDAQPAAHDARLDDRPALRAPQERDAPPLGASDTGSRASGAAKLTELLGVLMSVISASSLDELKQRSDIWNQMSKAAQDNLSRLSDAFQRATDEAKAAADAAEQAAAAAKQAGADAKAADAAVDAAQKRYDDAVKQGLPDDRLQSLKAALEQARQQAGDAHGRADALQADATKKLDAASALATQARACEQQVDDAVNQATQQYGASASLRTPQSPRLSGAAELTAVLGKLQELISSGNVKELESKQKLFTEMQAKREAELQKKSDEYQAQVKKAEEMQKTMGCIGKIVGWVITAVSFAAAAFTGGASLALAAVGLALAVGDEISRATTGVSFMDKLMQPVMDAILKPLMEMISSLITKALVACGVDQQKAELAGAILGAVVTGVALVAAAFVGASAVKAVASKVIDAMAGQLTKLMDSAIGKMLVQLIEKFSEKSGLQALGSRTATAMTRMRRAIGVEAKEDGMLLANRFEKAGTVMNVGNQVSQAAGGIVVGVERAKAMGLLADVKEAMYDIKLLGDLLKQAVDAFAEHNRVLAQLMQQMSDAGEMQTSTGKLILRNARAV</sequence>
<feature type="chain" id="PRO_0000343993" description="Translocator protein BipB">
    <location>
        <begin position="1"/>
        <end position="620"/>
    </location>
</feature>
<feature type="transmembrane region" description="Helical" evidence="1">
    <location>
        <begin position="355"/>
        <end position="375"/>
    </location>
</feature>
<feature type="transmembrane region" description="Helical" evidence="1">
    <location>
        <begin position="401"/>
        <end position="421"/>
    </location>
</feature>
<feature type="transmembrane region" description="Helical" evidence="1">
    <location>
        <begin position="430"/>
        <end position="450"/>
    </location>
</feature>
<feature type="region of interest" description="Disordered" evidence="2">
    <location>
        <begin position="58"/>
        <end position="95"/>
    </location>
</feature>
<feature type="coiled-coil region" evidence="1">
    <location>
        <begin position="309"/>
        <end position="339"/>
    </location>
</feature>
<feature type="compositionally biased region" description="Basic and acidic residues" evidence="2">
    <location>
        <begin position="66"/>
        <end position="84"/>
    </location>
</feature>
<reference key="1">
    <citation type="journal article" date="2008" name="FEMS Immunol. Med. Microbiol.">
        <title>Evaluating Burkholderia pseudomallei Bip proteins as vaccines and Bip antibodies as detection agents.</title>
        <authorList>
            <person name="Druar C."/>
            <person name="Yu F."/>
            <person name="Barnes J.L."/>
            <person name="Okinaka R.T."/>
            <person name="Chantratita N."/>
            <person name="Beg S."/>
            <person name="Stratilo C.W."/>
            <person name="Olive A.J."/>
            <person name="Soltes G."/>
            <person name="Russell M.L."/>
            <person name="Limmathurotsakul D."/>
            <person name="Norton R.E."/>
            <person name="Ni S.X."/>
            <person name="Picking W.D."/>
            <person name="Jackson P.J."/>
            <person name="Stewart D.I.H."/>
            <person name="Tsvetnitsky V."/>
            <person name="Picking W.L."/>
            <person name="Cherwonogrodzky J.W."/>
            <person name="Ketheesan N."/>
            <person name="Peacock S.J."/>
            <person name="Wiersma E.J."/>
        </authorList>
    </citation>
    <scope>NUCLEOTIDE SEQUENCE [GENOMIC DNA]</scope>
    <scope>IMMUNOGENICITY</scope>
    <source>
        <strain>K96243</strain>
        <strain>PHLS 40</strain>
        <strain>PHLS 79</strain>
        <strain>PHLS 91</strain>
        <strain>S13</strain>
    </source>
</reference>
<reference key="2">
    <citation type="journal article" date="2004" name="Proc. Natl. Acad. Sci. U.S.A.">
        <title>Genomic plasticity of the causative agent of melioidosis, Burkholderia pseudomallei.</title>
        <authorList>
            <person name="Holden M.T.G."/>
            <person name="Titball R.W."/>
            <person name="Peacock S.J."/>
            <person name="Cerdeno-Tarraga A.-M."/>
            <person name="Atkins T."/>
            <person name="Crossman L.C."/>
            <person name="Pitt T."/>
            <person name="Churcher C."/>
            <person name="Mungall K.L."/>
            <person name="Bentley S.D."/>
            <person name="Sebaihia M."/>
            <person name="Thomson N.R."/>
            <person name="Bason N."/>
            <person name="Beacham I.R."/>
            <person name="Brooks K."/>
            <person name="Brown K.A."/>
            <person name="Brown N.F."/>
            <person name="Challis G.L."/>
            <person name="Cherevach I."/>
            <person name="Chillingworth T."/>
            <person name="Cronin A."/>
            <person name="Crossett B."/>
            <person name="Davis P."/>
            <person name="DeShazer D."/>
            <person name="Feltwell T."/>
            <person name="Fraser A."/>
            <person name="Hance Z."/>
            <person name="Hauser H."/>
            <person name="Holroyd S."/>
            <person name="Jagels K."/>
            <person name="Keith K.E."/>
            <person name="Maddison M."/>
            <person name="Moule S."/>
            <person name="Price C."/>
            <person name="Quail M.A."/>
            <person name="Rabbinowitsch E."/>
            <person name="Rutherford K."/>
            <person name="Sanders M."/>
            <person name="Simmonds M."/>
            <person name="Songsivilai S."/>
            <person name="Stevens K."/>
            <person name="Tumapa S."/>
            <person name="Vesaratchavest M."/>
            <person name="Whitehead S."/>
            <person name="Yeats C."/>
            <person name="Barrell B.G."/>
            <person name="Oyston P.C.F."/>
            <person name="Parkhill J."/>
        </authorList>
    </citation>
    <scope>NUCLEOTIDE SEQUENCE [LARGE SCALE GENOMIC DNA]</scope>
    <source>
        <strain>K96243</strain>
    </source>
</reference>
<reference key="3">
    <citation type="journal article" date="2005" name="J. Bacteriol.">
        <title>Multinucleated giant cell formation and apoptosis in infected host cells is mediated by Burkholderia pseudomallei type III secretion protein BipB.</title>
        <authorList>
            <person name="Suparak S."/>
            <person name="Kespichayawattana W."/>
            <person name="Haque A."/>
            <person name="Easton A."/>
            <person name="Damnin S."/>
            <person name="Lertmemongkolchai G."/>
            <person name="Bancroft G.J."/>
            <person name="Korbsrisate S."/>
        </authorList>
    </citation>
    <scope>FUNCTION IN THE INDUCTION OF HOST MEMBRANE FUSION</scope>
    <source>
        <strain>K96243</strain>
    </source>
</reference>
<name>BIPB_BURPS</name>
<gene>
    <name type="primary">bipB</name>
    <name type="ordered locus">BPSS1532</name>
</gene>
<keyword id="KW-0175">Coiled coil</keyword>
<keyword id="KW-1043">Host membrane</keyword>
<keyword id="KW-0472">Membrane</keyword>
<keyword id="KW-1185">Reference proteome</keyword>
<keyword id="KW-0964">Secreted</keyword>
<keyword id="KW-0812">Transmembrane</keyword>
<keyword id="KW-1133">Transmembrane helix</keyword>
<keyword id="KW-0843">Virulence</keyword>
<protein>
    <recommendedName>
        <fullName>Translocator protein BipB</fullName>
    </recommendedName>
</protein>
<proteinExistence type="evidence at protein level"/>
<organism>
    <name type="scientific">Burkholderia pseudomallei (strain K96243)</name>
    <dbReference type="NCBI Taxonomy" id="272560"/>
    <lineage>
        <taxon>Bacteria</taxon>
        <taxon>Pseudomonadati</taxon>
        <taxon>Pseudomonadota</taxon>
        <taxon>Betaproteobacteria</taxon>
        <taxon>Burkholderiales</taxon>
        <taxon>Burkholderiaceae</taxon>
        <taxon>Burkholderia</taxon>
        <taxon>pseudomallei group</taxon>
    </lineage>
</organism>
<evidence type="ECO:0000255" key="1"/>
<evidence type="ECO:0000256" key="2">
    <source>
        <dbReference type="SAM" id="MobiDB-lite"/>
    </source>
</evidence>
<evidence type="ECO:0000269" key="3">
    <source>
    </source>
</evidence>
<evidence type="ECO:0000305" key="4"/>
<comment type="function">
    <text evidence="3">Plays a role in the bacterium-induced formation of multinucleated giant cell (MNGC), which is formed after host cell fusion, as well as in the intercellular spreading of bacteria and in the induction of apoptosis in macrophages. May act in concert with other effector proteins to induce fusion of host cell membranes.</text>
</comment>
<comment type="subcellular location">
    <subcellularLocation>
        <location evidence="4">Secreted</location>
    </subcellularLocation>
    <subcellularLocation>
        <location evidence="4">Host membrane</location>
    </subcellularLocation>
    <text>Secreted via the bsa type III secretion system, and probably inserted into host membranes.</text>
</comment>
<comment type="miscellaneous">
    <text>Human meliodoisis patients have detectable antibody response to BipB. However, BipB does not act as a protective antigen.</text>
</comment>
<comment type="similarity">
    <text evidence="4">Belongs to the SctE/SipB/YopB family.</text>
</comment>
<dbReference type="EMBL" id="EF428328">
    <property type="protein sequence ID" value="ABO26346.1"/>
    <property type="molecule type" value="Genomic_DNA"/>
</dbReference>
<dbReference type="EMBL" id="EF428329">
    <property type="protein sequence ID" value="ABO26348.1"/>
    <property type="molecule type" value="Genomic_DNA"/>
</dbReference>
<dbReference type="EMBL" id="EF428332">
    <property type="protein sequence ID" value="ABO26354.1"/>
    <property type="molecule type" value="Genomic_DNA"/>
</dbReference>
<dbReference type="EMBL" id="EF436253">
    <property type="protein sequence ID" value="ABO28812.1"/>
    <property type="molecule type" value="Genomic_DNA"/>
</dbReference>
<dbReference type="EMBL" id="EF436254">
    <property type="protein sequence ID" value="ABO28814.1"/>
    <property type="molecule type" value="Genomic_DNA"/>
</dbReference>
<dbReference type="EMBL" id="BX571966">
    <property type="protein sequence ID" value="CAH39005.1"/>
    <property type="molecule type" value="Genomic_DNA"/>
</dbReference>
<dbReference type="RefSeq" id="WP_004533397.1">
    <property type="nucleotide sequence ID" value="NZ_CP009537.1"/>
</dbReference>
<dbReference type="RefSeq" id="YP_111538.1">
    <property type="nucleotide sequence ID" value="NC_006351.1"/>
</dbReference>
<dbReference type="SMR" id="Q63K34"/>
<dbReference type="STRING" id="272560.BPSS1532"/>
<dbReference type="GeneID" id="93063712"/>
<dbReference type="KEGG" id="bps:BPSS1532"/>
<dbReference type="PATRIC" id="fig|272560.51.peg.4887"/>
<dbReference type="eggNOG" id="ENOG502ZBCB">
    <property type="taxonomic scope" value="Bacteria"/>
</dbReference>
<dbReference type="PHI-base" id="PHI:5322"/>
<dbReference type="Proteomes" id="UP000000605">
    <property type="component" value="Chromosome 2"/>
</dbReference>
<dbReference type="GO" id="GO:0005576">
    <property type="term" value="C:extracellular region"/>
    <property type="evidence" value="ECO:0007669"/>
    <property type="project" value="UniProtKB-SubCell"/>
</dbReference>
<dbReference type="GO" id="GO:0033644">
    <property type="term" value="C:host cell membrane"/>
    <property type="evidence" value="ECO:0007669"/>
    <property type="project" value="UniProtKB-SubCell"/>
</dbReference>
<dbReference type="GO" id="GO:0016020">
    <property type="term" value="C:membrane"/>
    <property type="evidence" value="ECO:0007669"/>
    <property type="project" value="UniProtKB-KW"/>
</dbReference>
<dbReference type="Gene3D" id="1.20.120.330">
    <property type="entry name" value="Nucleotidyltransferases domain 2"/>
    <property type="match status" value="2"/>
</dbReference>
<dbReference type="InterPro" id="IPR006972">
    <property type="entry name" value="BipB-like_C"/>
</dbReference>
<dbReference type="InterPro" id="IPR032391">
    <property type="entry name" value="IpaB/BipB/SctE_N"/>
</dbReference>
<dbReference type="InterPro" id="IPR003895">
    <property type="entry name" value="T3SS_SctE/BipB"/>
</dbReference>
<dbReference type="Pfam" id="PF04888">
    <property type="entry name" value="SseC"/>
    <property type="match status" value="1"/>
</dbReference>
<dbReference type="Pfam" id="PF16535">
    <property type="entry name" value="T3SSipB"/>
    <property type="match status" value="1"/>
</dbReference>
<dbReference type="PRINTS" id="PR01375">
    <property type="entry name" value="BACINVASINB"/>
</dbReference>
<accession>Q63K34</accession>